<organism>
    <name type="scientific">Streptococcus thermophilus (strain ATCC BAA-491 / LMD-9)</name>
    <dbReference type="NCBI Taxonomy" id="322159"/>
    <lineage>
        <taxon>Bacteria</taxon>
        <taxon>Bacillati</taxon>
        <taxon>Bacillota</taxon>
        <taxon>Bacilli</taxon>
        <taxon>Lactobacillales</taxon>
        <taxon>Streptococcaceae</taxon>
        <taxon>Streptococcus</taxon>
    </lineage>
</organism>
<comment type="function">
    <text evidence="1">Catalyzes the ATP-dependent amidation of deamido-NAD to form NAD. Uses ammonia as a nitrogen source.</text>
</comment>
<comment type="catalytic activity">
    <reaction evidence="1">
        <text>deamido-NAD(+) + NH4(+) + ATP = AMP + diphosphate + NAD(+) + H(+)</text>
        <dbReference type="Rhea" id="RHEA:21188"/>
        <dbReference type="ChEBI" id="CHEBI:15378"/>
        <dbReference type="ChEBI" id="CHEBI:28938"/>
        <dbReference type="ChEBI" id="CHEBI:30616"/>
        <dbReference type="ChEBI" id="CHEBI:33019"/>
        <dbReference type="ChEBI" id="CHEBI:57540"/>
        <dbReference type="ChEBI" id="CHEBI:58437"/>
        <dbReference type="ChEBI" id="CHEBI:456215"/>
        <dbReference type="EC" id="6.3.1.5"/>
    </reaction>
</comment>
<comment type="pathway">
    <text evidence="1">Cofactor biosynthesis; NAD(+) biosynthesis; NAD(+) from deamido-NAD(+) (ammonia route): step 1/1.</text>
</comment>
<comment type="subunit">
    <text evidence="1">Homodimer.</text>
</comment>
<comment type="similarity">
    <text evidence="1">Belongs to the NAD synthetase family.</text>
</comment>
<reference key="1">
    <citation type="journal article" date="2006" name="Proc. Natl. Acad. Sci. U.S.A.">
        <title>Comparative genomics of the lactic acid bacteria.</title>
        <authorList>
            <person name="Makarova K.S."/>
            <person name="Slesarev A."/>
            <person name="Wolf Y.I."/>
            <person name="Sorokin A."/>
            <person name="Mirkin B."/>
            <person name="Koonin E.V."/>
            <person name="Pavlov A."/>
            <person name="Pavlova N."/>
            <person name="Karamychev V."/>
            <person name="Polouchine N."/>
            <person name="Shakhova V."/>
            <person name="Grigoriev I."/>
            <person name="Lou Y."/>
            <person name="Rohksar D."/>
            <person name="Lucas S."/>
            <person name="Huang K."/>
            <person name="Goodstein D.M."/>
            <person name="Hawkins T."/>
            <person name="Plengvidhya V."/>
            <person name="Welker D."/>
            <person name="Hughes J."/>
            <person name="Goh Y."/>
            <person name="Benson A."/>
            <person name="Baldwin K."/>
            <person name="Lee J.-H."/>
            <person name="Diaz-Muniz I."/>
            <person name="Dosti B."/>
            <person name="Smeianov V."/>
            <person name="Wechter W."/>
            <person name="Barabote R."/>
            <person name="Lorca G."/>
            <person name="Altermann E."/>
            <person name="Barrangou R."/>
            <person name="Ganesan B."/>
            <person name="Xie Y."/>
            <person name="Rawsthorne H."/>
            <person name="Tamir D."/>
            <person name="Parker C."/>
            <person name="Breidt F."/>
            <person name="Broadbent J.R."/>
            <person name="Hutkins R."/>
            <person name="O'Sullivan D."/>
            <person name="Steele J."/>
            <person name="Unlu G."/>
            <person name="Saier M.H. Jr."/>
            <person name="Klaenhammer T."/>
            <person name="Richardson P."/>
            <person name="Kozyavkin S."/>
            <person name="Weimer B.C."/>
            <person name="Mills D.A."/>
        </authorList>
    </citation>
    <scope>NUCLEOTIDE SEQUENCE [LARGE SCALE GENOMIC DNA]</scope>
    <source>
        <strain>ATCC BAA-491 / LMD-9</strain>
    </source>
</reference>
<name>NADE_STRTD</name>
<gene>
    <name evidence="1" type="primary">nadE</name>
    <name type="ordered locus">STER_0274</name>
</gene>
<sequence>MTLQETIIAQLGVKPSINPKEEIRKSVDFLKAYMIKHPFLKTYVLGISGGQDSTLAGRLAQLAVEELRAETEKDYQFIAIRLPYGVQADEDDAQRALAFIKPDVSLTINIKEAVDGQVAELAKAGVNVSDFNKGNIKARQRMITQYAVAGENSGAVIGTDHAAENLTGFFTKFGDGGADILPLFRLNKRQGAALLAELGADKALYEKVPTADLEEDKPGIADEVALGVTYHEIDDYLEGKEVSAKAQETIETWWRKGQHKRHLPITIFDDFWK</sequence>
<proteinExistence type="inferred from homology"/>
<accession>Q03MI7</accession>
<keyword id="KW-0067">ATP-binding</keyword>
<keyword id="KW-0436">Ligase</keyword>
<keyword id="KW-0460">Magnesium</keyword>
<keyword id="KW-0479">Metal-binding</keyword>
<keyword id="KW-0520">NAD</keyword>
<keyword id="KW-0547">Nucleotide-binding</keyword>
<feature type="chain" id="PRO_1000077633" description="NH(3)-dependent NAD(+) synthetase">
    <location>
        <begin position="1"/>
        <end position="273"/>
    </location>
</feature>
<feature type="binding site" evidence="1">
    <location>
        <begin position="46"/>
        <end position="53"/>
    </location>
    <ligand>
        <name>ATP</name>
        <dbReference type="ChEBI" id="CHEBI:30616"/>
    </ligand>
</feature>
<feature type="binding site" evidence="1">
    <location>
        <position position="52"/>
    </location>
    <ligand>
        <name>Mg(2+)</name>
        <dbReference type="ChEBI" id="CHEBI:18420"/>
    </ligand>
</feature>
<feature type="binding site" evidence="1">
    <location>
        <position position="139"/>
    </location>
    <ligand>
        <name>deamido-NAD(+)</name>
        <dbReference type="ChEBI" id="CHEBI:58437"/>
    </ligand>
</feature>
<feature type="binding site" evidence="1">
    <location>
        <position position="159"/>
    </location>
    <ligand>
        <name>ATP</name>
        <dbReference type="ChEBI" id="CHEBI:30616"/>
    </ligand>
</feature>
<feature type="binding site" evidence="1">
    <location>
        <position position="164"/>
    </location>
    <ligand>
        <name>Mg(2+)</name>
        <dbReference type="ChEBI" id="CHEBI:18420"/>
    </ligand>
</feature>
<feature type="binding site" evidence="1">
    <location>
        <position position="172"/>
    </location>
    <ligand>
        <name>deamido-NAD(+)</name>
        <dbReference type="ChEBI" id="CHEBI:58437"/>
    </ligand>
</feature>
<feature type="binding site" evidence="1">
    <location>
        <position position="179"/>
    </location>
    <ligand>
        <name>deamido-NAD(+)</name>
        <dbReference type="ChEBI" id="CHEBI:58437"/>
    </ligand>
</feature>
<feature type="binding site" evidence="1">
    <location>
        <position position="188"/>
    </location>
    <ligand>
        <name>ATP</name>
        <dbReference type="ChEBI" id="CHEBI:30616"/>
    </ligand>
</feature>
<feature type="binding site" evidence="1">
    <location>
        <position position="210"/>
    </location>
    <ligand>
        <name>ATP</name>
        <dbReference type="ChEBI" id="CHEBI:30616"/>
    </ligand>
</feature>
<feature type="binding site" evidence="1">
    <location>
        <begin position="259"/>
        <end position="260"/>
    </location>
    <ligand>
        <name>deamido-NAD(+)</name>
        <dbReference type="ChEBI" id="CHEBI:58437"/>
    </ligand>
</feature>
<dbReference type="EC" id="6.3.1.5" evidence="1"/>
<dbReference type="EMBL" id="CP000419">
    <property type="protein sequence ID" value="ABJ65585.1"/>
    <property type="molecule type" value="Genomic_DNA"/>
</dbReference>
<dbReference type="RefSeq" id="WP_002949400.1">
    <property type="nucleotide sequence ID" value="NZ_CP086001.1"/>
</dbReference>
<dbReference type="SMR" id="Q03MI7"/>
<dbReference type="GeneID" id="66898158"/>
<dbReference type="KEGG" id="ste:STER_0274"/>
<dbReference type="HOGENOM" id="CLU_059327_3_0_9"/>
<dbReference type="UniPathway" id="UPA00253">
    <property type="reaction ID" value="UER00333"/>
</dbReference>
<dbReference type="GO" id="GO:0005737">
    <property type="term" value="C:cytoplasm"/>
    <property type="evidence" value="ECO:0007669"/>
    <property type="project" value="InterPro"/>
</dbReference>
<dbReference type="GO" id="GO:0005524">
    <property type="term" value="F:ATP binding"/>
    <property type="evidence" value="ECO:0007669"/>
    <property type="project" value="UniProtKB-UniRule"/>
</dbReference>
<dbReference type="GO" id="GO:0004359">
    <property type="term" value="F:glutaminase activity"/>
    <property type="evidence" value="ECO:0007669"/>
    <property type="project" value="InterPro"/>
</dbReference>
<dbReference type="GO" id="GO:0046872">
    <property type="term" value="F:metal ion binding"/>
    <property type="evidence" value="ECO:0007669"/>
    <property type="project" value="UniProtKB-KW"/>
</dbReference>
<dbReference type="GO" id="GO:0003952">
    <property type="term" value="F:NAD+ synthase (glutamine-hydrolyzing) activity"/>
    <property type="evidence" value="ECO:0007669"/>
    <property type="project" value="InterPro"/>
</dbReference>
<dbReference type="GO" id="GO:0008795">
    <property type="term" value="F:NAD+ synthase activity"/>
    <property type="evidence" value="ECO:0007669"/>
    <property type="project" value="UniProtKB-UniRule"/>
</dbReference>
<dbReference type="GO" id="GO:0009435">
    <property type="term" value="P:NAD biosynthetic process"/>
    <property type="evidence" value="ECO:0007669"/>
    <property type="project" value="UniProtKB-UniRule"/>
</dbReference>
<dbReference type="CDD" id="cd00553">
    <property type="entry name" value="NAD_synthase"/>
    <property type="match status" value="1"/>
</dbReference>
<dbReference type="FunFam" id="3.40.50.620:FF:000015">
    <property type="entry name" value="NH(3)-dependent NAD(+) synthetase"/>
    <property type="match status" value="1"/>
</dbReference>
<dbReference type="Gene3D" id="3.40.50.620">
    <property type="entry name" value="HUPs"/>
    <property type="match status" value="1"/>
</dbReference>
<dbReference type="HAMAP" id="MF_00193">
    <property type="entry name" value="NadE_ammonia_dep"/>
    <property type="match status" value="1"/>
</dbReference>
<dbReference type="InterPro" id="IPR022310">
    <property type="entry name" value="NAD/GMP_synthase"/>
</dbReference>
<dbReference type="InterPro" id="IPR003694">
    <property type="entry name" value="NAD_synthase"/>
</dbReference>
<dbReference type="InterPro" id="IPR022926">
    <property type="entry name" value="NH(3)-dep_NAD(+)_synth"/>
</dbReference>
<dbReference type="InterPro" id="IPR014729">
    <property type="entry name" value="Rossmann-like_a/b/a_fold"/>
</dbReference>
<dbReference type="NCBIfam" id="TIGR00552">
    <property type="entry name" value="nadE"/>
    <property type="match status" value="1"/>
</dbReference>
<dbReference type="NCBIfam" id="NF001979">
    <property type="entry name" value="PRK00768.1"/>
    <property type="match status" value="1"/>
</dbReference>
<dbReference type="PANTHER" id="PTHR23090">
    <property type="entry name" value="NH 3 /GLUTAMINE-DEPENDENT NAD + SYNTHETASE"/>
    <property type="match status" value="1"/>
</dbReference>
<dbReference type="PANTHER" id="PTHR23090:SF7">
    <property type="entry name" value="NH(3)-DEPENDENT NAD(+) SYNTHETASE"/>
    <property type="match status" value="1"/>
</dbReference>
<dbReference type="Pfam" id="PF02540">
    <property type="entry name" value="NAD_synthase"/>
    <property type="match status" value="1"/>
</dbReference>
<dbReference type="SUPFAM" id="SSF52402">
    <property type="entry name" value="Adenine nucleotide alpha hydrolases-like"/>
    <property type="match status" value="1"/>
</dbReference>
<protein>
    <recommendedName>
        <fullName evidence="1">NH(3)-dependent NAD(+) synthetase</fullName>
        <ecNumber evidence="1">6.3.1.5</ecNumber>
    </recommendedName>
</protein>
<evidence type="ECO:0000255" key="1">
    <source>
        <dbReference type="HAMAP-Rule" id="MF_00193"/>
    </source>
</evidence>